<dbReference type="EC" id="3.1.-.-" evidence="1"/>
<dbReference type="EC" id="3.6.4.-" evidence="1"/>
<dbReference type="EMBL" id="AL766853">
    <property type="protein sequence ID" value="CAD47423.1"/>
    <property type="molecule type" value="Genomic_DNA"/>
</dbReference>
<dbReference type="RefSeq" id="WP_001060328.1">
    <property type="nucleotide sequence ID" value="NC_004368.1"/>
</dbReference>
<dbReference type="SMR" id="Q8E3J5"/>
<dbReference type="KEGG" id="san:gbs1764"/>
<dbReference type="eggNOG" id="COG1193">
    <property type="taxonomic scope" value="Bacteria"/>
</dbReference>
<dbReference type="HOGENOM" id="CLU_011252_2_1_9"/>
<dbReference type="Proteomes" id="UP000000823">
    <property type="component" value="Chromosome"/>
</dbReference>
<dbReference type="GO" id="GO:0005524">
    <property type="term" value="F:ATP binding"/>
    <property type="evidence" value="ECO:0007669"/>
    <property type="project" value="UniProtKB-UniRule"/>
</dbReference>
<dbReference type="GO" id="GO:0016887">
    <property type="term" value="F:ATP hydrolysis activity"/>
    <property type="evidence" value="ECO:0007669"/>
    <property type="project" value="InterPro"/>
</dbReference>
<dbReference type="GO" id="GO:0140664">
    <property type="term" value="F:ATP-dependent DNA damage sensor activity"/>
    <property type="evidence" value="ECO:0007669"/>
    <property type="project" value="InterPro"/>
</dbReference>
<dbReference type="GO" id="GO:0004519">
    <property type="term" value="F:endonuclease activity"/>
    <property type="evidence" value="ECO:0007669"/>
    <property type="project" value="UniProtKB-UniRule"/>
</dbReference>
<dbReference type="GO" id="GO:0030983">
    <property type="term" value="F:mismatched DNA binding"/>
    <property type="evidence" value="ECO:0007669"/>
    <property type="project" value="InterPro"/>
</dbReference>
<dbReference type="GO" id="GO:0043023">
    <property type="term" value="F:ribosomal large subunit binding"/>
    <property type="evidence" value="ECO:0007669"/>
    <property type="project" value="UniProtKB-UniRule"/>
</dbReference>
<dbReference type="GO" id="GO:0019843">
    <property type="term" value="F:rRNA binding"/>
    <property type="evidence" value="ECO:0007669"/>
    <property type="project" value="UniProtKB-UniRule"/>
</dbReference>
<dbReference type="GO" id="GO:0006298">
    <property type="term" value="P:mismatch repair"/>
    <property type="evidence" value="ECO:0007669"/>
    <property type="project" value="InterPro"/>
</dbReference>
<dbReference type="GO" id="GO:0045910">
    <property type="term" value="P:negative regulation of DNA recombination"/>
    <property type="evidence" value="ECO:0007669"/>
    <property type="project" value="InterPro"/>
</dbReference>
<dbReference type="GO" id="GO:0072344">
    <property type="term" value="P:rescue of stalled ribosome"/>
    <property type="evidence" value="ECO:0007669"/>
    <property type="project" value="UniProtKB-UniRule"/>
</dbReference>
<dbReference type="CDD" id="cd03280">
    <property type="entry name" value="ABC_MutS2"/>
    <property type="match status" value="1"/>
</dbReference>
<dbReference type="FunFam" id="3.40.50.300:FF:000830">
    <property type="entry name" value="Endonuclease MutS2"/>
    <property type="match status" value="1"/>
</dbReference>
<dbReference type="Gene3D" id="3.30.1370.110">
    <property type="match status" value="1"/>
</dbReference>
<dbReference type="Gene3D" id="3.40.50.300">
    <property type="entry name" value="P-loop containing nucleotide triphosphate hydrolases"/>
    <property type="match status" value="1"/>
</dbReference>
<dbReference type="HAMAP" id="MF_00092">
    <property type="entry name" value="MutS2"/>
    <property type="match status" value="1"/>
</dbReference>
<dbReference type="InterPro" id="IPR000432">
    <property type="entry name" value="DNA_mismatch_repair_MutS_C"/>
</dbReference>
<dbReference type="InterPro" id="IPR007696">
    <property type="entry name" value="DNA_mismatch_repair_MutS_core"/>
</dbReference>
<dbReference type="InterPro" id="IPR036187">
    <property type="entry name" value="DNA_mismatch_repair_MutS_sf"/>
</dbReference>
<dbReference type="InterPro" id="IPR046893">
    <property type="entry name" value="MSSS"/>
</dbReference>
<dbReference type="InterPro" id="IPR045076">
    <property type="entry name" value="MutS"/>
</dbReference>
<dbReference type="InterPro" id="IPR005747">
    <property type="entry name" value="MutS2"/>
</dbReference>
<dbReference type="InterPro" id="IPR027417">
    <property type="entry name" value="P-loop_NTPase"/>
</dbReference>
<dbReference type="InterPro" id="IPR002625">
    <property type="entry name" value="Smr_dom"/>
</dbReference>
<dbReference type="InterPro" id="IPR036063">
    <property type="entry name" value="Smr_dom_sf"/>
</dbReference>
<dbReference type="NCBIfam" id="TIGR01069">
    <property type="entry name" value="mutS2"/>
    <property type="match status" value="1"/>
</dbReference>
<dbReference type="PANTHER" id="PTHR48466:SF2">
    <property type="entry name" value="OS10G0509000 PROTEIN"/>
    <property type="match status" value="1"/>
</dbReference>
<dbReference type="PANTHER" id="PTHR48466">
    <property type="entry name" value="OS10G0509000 PROTEIN-RELATED"/>
    <property type="match status" value="1"/>
</dbReference>
<dbReference type="Pfam" id="PF20297">
    <property type="entry name" value="MSSS"/>
    <property type="match status" value="1"/>
</dbReference>
<dbReference type="Pfam" id="PF00488">
    <property type="entry name" value="MutS_V"/>
    <property type="match status" value="1"/>
</dbReference>
<dbReference type="Pfam" id="PF01713">
    <property type="entry name" value="Smr"/>
    <property type="match status" value="1"/>
</dbReference>
<dbReference type="PIRSF" id="PIRSF005814">
    <property type="entry name" value="MutS_YshD"/>
    <property type="match status" value="1"/>
</dbReference>
<dbReference type="SMART" id="SM00534">
    <property type="entry name" value="MUTSac"/>
    <property type="match status" value="1"/>
</dbReference>
<dbReference type="SMART" id="SM00533">
    <property type="entry name" value="MUTSd"/>
    <property type="match status" value="1"/>
</dbReference>
<dbReference type="SMART" id="SM00463">
    <property type="entry name" value="SMR"/>
    <property type="match status" value="1"/>
</dbReference>
<dbReference type="SUPFAM" id="SSF48334">
    <property type="entry name" value="DNA repair protein MutS, domain III"/>
    <property type="match status" value="1"/>
</dbReference>
<dbReference type="SUPFAM" id="SSF52540">
    <property type="entry name" value="P-loop containing nucleoside triphosphate hydrolases"/>
    <property type="match status" value="1"/>
</dbReference>
<dbReference type="SUPFAM" id="SSF160443">
    <property type="entry name" value="SMR domain-like"/>
    <property type="match status" value="1"/>
</dbReference>
<dbReference type="PROSITE" id="PS00486">
    <property type="entry name" value="DNA_MISMATCH_REPAIR_2"/>
    <property type="match status" value="1"/>
</dbReference>
<dbReference type="PROSITE" id="PS50828">
    <property type="entry name" value="SMR"/>
    <property type="match status" value="1"/>
</dbReference>
<accession>Q8E3J5</accession>
<feature type="chain" id="PRO_1000093387" description="Endonuclease MutS2">
    <location>
        <begin position="1"/>
        <end position="779"/>
    </location>
</feature>
<feature type="domain" description="Smr" evidence="1">
    <location>
        <begin position="704"/>
        <end position="779"/>
    </location>
</feature>
<feature type="binding site" evidence="1">
    <location>
        <begin position="328"/>
        <end position="335"/>
    </location>
    <ligand>
        <name>ATP</name>
        <dbReference type="ChEBI" id="CHEBI:30616"/>
    </ligand>
</feature>
<name>MUTS2_STRA3</name>
<evidence type="ECO:0000255" key="1">
    <source>
        <dbReference type="HAMAP-Rule" id="MF_00092"/>
    </source>
</evidence>
<sequence length="779" mass="87783">MNNKILEQLEFNKVKELILPYLKTEQSQEELSELEPMTEAPKIEKSFNEISDMEQIFVEHHSFGIVSLSSISESLKRLELSADLNIQELLVIKKVLQSSSDMIHFYSDLDNVSFQSLDRLFENLEQFPNLQGSFQAINDGGFLEHFASPELERIRRQLTNSERRVRQILQDMLKEKAELLSENLIASRSGRSVLPVKNTYRNRISGVVHDISSSGSTVYIEPRAVVTLNEEITQLRADERHEESRILHAFSDLLRPHVATIRNNAWILGHLDFVRAKYLFMSDNKATIPEISNDSTLALINVRHPLLSNPVANDLHFDQDLTAIVITGPNTGGKTIMLKTLGLAQLMGQSGLPVLADKGSKIAVFNNIFADIGDEQSIEQSLSTFSSHMTHIVSILNEADHNSLVLFDELGAGTDPQEGASLAMAILEHLRLSNIKTMATTHYPELKAYGIETNFVENASMEFDAETLSPTYRFMQGVPGRSNAFEIASRLGLAPFIVKQAKQMTDSDSDVNRIIEQLEAQTLETRRRLDHIKEIEQENLKFNRAVKKLYNEFSHERDKELEKIYQEAQEIVDMALNESDTILKKLNDKSQLKPHEIIDAKAQIKKLAPQVDLSKNKVLNKAKKIKAARAPRIGDDIIVTSYGQRGTLTSQLKDGRWEAQVGIIKMTLTQDEFTLVRVQEEQKVKSKQINVVKKADSSGPRARLDLRGKRYEEAMQELDNFIDQALLNNMGQVDIIHGIGTGVIREGVTKYLRRNKHVKHFAYAPQNAGGSGATIVTLG</sequence>
<comment type="function">
    <text evidence="1">Endonuclease that is involved in the suppression of homologous recombination and thus may have a key role in the control of bacterial genetic diversity.</text>
</comment>
<comment type="function">
    <text evidence="1">Acts as a ribosome collision sensor, splitting the ribosome into its 2 subunits. Detects stalled/collided 70S ribosomes which it binds and splits by an ATP-hydrolysis driven conformational change. Acts upstream of the ribosome quality control system (RQC), a ribosome-associated complex that mediates the extraction of incompletely synthesized nascent chains from stalled ribosomes and their subsequent degradation. Probably generates substrates for RQC.</text>
</comment>
<comment type="subunit">
    <text evidence="1">Homodimer. Binds to stalled ribosomes, contacting rRNA.</text>
</comment>
<comment type="similarity">
    <text evidence="1">Belongs to the DNA mismatch repair MutS family. MutS2 subfamily.</text>
</comment>
<gene>
    <name evidence="1" type="primary">mutS2</name>
    <name evidence="1" type="synonym">rqcU</name>
    <name type="ordered locus">gbs1764</name>
</gene>
<proteinExistence type="inferred from homology"/>
<organism>
    <name type="scientific">Streptococcus agalactiae serotype III (strain NEM316)</name>
    <dbReference type="NCBI Taxonomy" id="211110"/>
    <lineage>
        <taxon>Bacteria</taxon>
        <taxon>Bacillati</taxon>
        <taxon>Bacillota</taxon>
        <taxon>Bacilli</taxon>
        <taxon>Lactobacillales</taxon>
        <taxon>Streptococcaceae</taxon>
        <taxon>Streptococcus</taxon>
    </lineage>
</organism>
<keyword id="KW-0067">ATP-binding</keyword>
<keyword id="KW-0238">DNA-binding</keyword>
<keyword id="KW-0255">Endonuclease</keyword>
<keyword id="KW-0378">Hydrolase</keyword>
<keyword id="KW-0540">Nuclease</keyword>
<keyword id="KW-0547">Nucleotide-binding</keyword>
<keyword id="KW-0694">RNA-binding</keyword>
<keyword id="KW-0699">rRNA-binding</keyword>
<reference key="1">
    <citation type="journal article" date="2002" name="Mol. Microbiol.">
        <title>Genome sequence of Streptococcus agalactiae, a pathogen causing invasive neonatal disease.</title>
        <authorList>
            <person name="Glaser P."/>
            <person name="Rusniok C."/>
            <person name="Buchrieser C."/>
            <person name="Chevalier F."/>
            <person name="Frangeul L."/>
            <person name="Msadek T."/>
            <person name="Zouine M."/>
            <person name="Couve E."/>
            <person name="Lalioui L."/>
            <person name="Poyart C."/>
            <person name="Trieu-Cuot P."/>
            <person name="Kunst F."/>
        </authorList>
    </citation>
    <scope>NUCLEOTIDE SEQUENCE [LARGE SCALE GENOMIC DNA]</scope>
    <source>
        <strain>NEM316</strain>
    </source>
</reference>
<protein>
    <recommendedName>
        <fullName evidence="1">Endonuclease MutS2</fullName>
        <ecNumber evidence="1">3.1.-.-</ecNumber>
    </recommendedName>
    <alternativeName>
        <fullName evidence="1">Ribosome-associated protein quality control-upstream factor</fullName>
        <shortName evidence="1">RQC-upstream factor</shortName>
        <shortName evidence="1">RqcU</shortName>
        <ecNumber evidence="1">3.6.4.-</ecNumber>
    </alternativeName>
</protein>